<dbReference type="EMBL" id="AK020863">
    <property type="protein sequence ID" value="BAB32232.1"/>
    <property type="molecule type" value="mRNA"/>
</dbReference>
<dbReference type="EMBL" id="AK020903">
    <property type="protein sequence ID" value="BAB32247.1"/>
    <property type="molecule type" value="mRNA"/>
</dbReference>
<dbReference type="EMBL" id="BC025929">
    <property type="protein sequence ID" value="AAH25929.1"/>
    <property type="molecule type" value="mRNA"/>
</dbReference>
<dbReference type="EMBL" id="U38495">
    <property type="protein sequence ID" value="AAB01726.1"/>
    <property type="molecule type" value="mRNA"/>
</dbReference>
<dbReference type="CCDS" id="CCDS39418.1"/>
<dbReference type="RefSeq" id="NP_034444.1">
    <property type="nucleotide sequence ID" value="NM_010314.3"/>
</dbReference>
<dbReference type="RefSeq" id="XP_006505049.1">
    <property type="nucleotide sequence ID" value="XM_006504986.3"/>
</dbReference>
<dbReference type="RefSeq" id="XP_017176877.1">
    <property type="nucleotide sequence ID" value="XM_017321388.3"/>
</dbReference>
<dbReference type="RefSeq" id="XP_017176878.1">
    <property type="nucleotide sequence ID" value="XM_017321389.3"/>
</dbReference>
<dbReference type="SMR" id="Q61012"/>
<dbReference type="FunCoup" id="Q61012">
    <property type="interactions" value="673"/>
</dbReference>
<dbReference type="IntAct" id="Q61012">
    <property type="interactions" value="1"/>
</dbReference>
<dbReference type="STRING" id="10090.ENSMUSP00000031673"/>
<dbReference type="PhosphoSitePlus" id="Q61012"/>
<dbReference type="PaxDb" id="10090-ENSMUSP00000031673"/>
<dbReference type="ProteomicsDB" id="271193"/>
<dbReference type="Antibodypedia" id="30066">
    <property type="antibodies" value="88 antibodies from 22 providers"/>
</dbReference>
<dbReference type="DNASU" id="14699"/>
<dbReference type="Ensembl" id="ENSMUST00000031673.7">
    <property type="protein sequence ID" value="ENSMUSP00000031673.6"/>
    <property type="gene ID" value="ENSMUSG00000029663.11"/>
</dbReference>
<dbReference type="GeneID" id="14699"/>
<dbReference type="KEGG" id="mmu:14699"/>
<dbReference type="UCSC" id="uc009avi.1">
    <property type="organism name" value="mouse"/>
</dbReference>
<dbReference type="AGR" id="MGI:109165"/>
<dbReference type="CTD" id="2792"/>
<dbReference type="MGI" id="MGI:109165">
    <property type="gene designation" value="Gngt1"/>
</dbReference>
<dbReference type="VEuPathDB" id="HostDB:ENSMUSG00000029663"/>
<dbReference type="eggNOG" id="KOG4119">
    <property type="taxonomic scope" value="Eukaryota"/>
</dbReference>
<dbReference type="GeneTree" id="ENSGT01100000263525"/>
<dbReference type="HOGENOM" id="CLU_168377_2_0_1"/>
<dbReference type="InParanoid" id="Q61012"/>
<dbReference type="OMA" id="CEEVMEY"/>
<dbReference type="OrthoDB" id="9933679at2759"/>
<dbReference type="PhylomeDB" id="Q61012"/>
<dbReference type="TreeFam" id="TF319909"/>
<dbReference type="Reactome" id="R-MMU-1296041">
    <property type="pathway name" value="Activation of G protein gated Potassium channels"/>
</dbReference>
<dbReference type="Reactome" id="R-MMU-202040">
    <property type="pathway name" value="G-protein activation"/>
</dbReference>
<dbReference type="Reactome" id="R-MMU-2485179">
    <property type="pathway name" value="Activation of the phototransduction cascade"/>
</dbReference>
<dbReference type="Reactome" id="R-MMU-2514859">
    <property type="pathway name" value="Inactivation, recovery and regulation of the phototransduction cascade"/>
</dbReference>
<dbReference type="Reactome" id="R-MMU-381676">
    <property type="pathway name" value="Glucagon-like Peptide-1 (GLP1) regulates insulin secretion"/>
</dbReference>
<dbReference type="Reactome" id="R-MMU-392170">
    <property type="pathway name" value="ADP signalling through P2Y purinoceptor 12"/>
</dbReference>
<dbReference type="Reactome" id="R-MMU-392451">
    <property type="pathway name" value="G beta:gamma signalling through PI3Kgamma"/>
</dbReference>
<dbReference type="Reactome" id="R-MMU-392851">
    <property type="pathway name" value="Prostacyclin signalling through prostacyclin receptor"/>
</dbReference>
<dbReference type="Reactome" id="R-MMU-400042">
    <property type="pathway name" value="Adrenaline,noradrenaline inhibits insulin secretion"/>
</dbReference>
<dbReference type="Reactome" id="R-MMU-4086398">
    <property type="pathway name" value="Ca2+ pathway"/>
</dbReference>
<dbReference type="Reactome" id="R-MMU-416476">
    <property type="pathway name" value="G alpha (q) signalling events"/>
</dbReference>
<dbReference type="Reactome" id="R-MMU-416482">
    <property type="pathway name" value="G alpha (12/13) signalling events"/>
</dbReference>
<dbReference type="Reactome" id="R-MMU-418217">
    <property type="pathway name" value="G beta:gamma signalling through PLC beta"/>
</dbReference>
<dbReference type="Reactome" id="R-MMU-418555">
    <property type="pathway name" value="G alpha (s) signalling events"/>
</dbReference>
<dbReference type="Reactome" id="R-MMU-418592">
    <property type="pathway name" value="ADP signalling through P2Y purinoceptor 1"/>
</dbReference>
<dbReference type="Reactome" id="R-MMU-418594">
    <property type="pathway name" value="G alpha (i) signalling events"/>
</dbReference>
<dbReference type="Reactome" id="R-MMU-418597">
    <property type="pathway name" value="G alpha (z) signalling events"/>
</dbReference>
<dbReference type="Reactome" id="R-MMU-420092">
    <property type="pathway name" value="Glucagon-type ligand receptors"/>
</dbReference>
<dbReference type="Reactome" id="R-MMU-428930">
    <property type="pathway name" value="Thromboxane signalling through TP receptor"/>
</dbReference>
<dbReference type="Reactome" id="R-MMU-432040">
    <property type="pathway name" value="Vasopressin regulates renal water homeostasis via Aquaporins"/>
</dbReference>
<dbReference type="Reactome" id="R-MMU-456926">
    <property type="pathway name" value="Thrombin signalling through proteinase activated receptors (PARs)"/>
</dbReference>
<dbReference type="Reactome" id="R-MMU-500657">
    <property type="pathway name" value="Presynaptic function of Kainate receptors"/>
</dbReference>
<dbReference type="Reactome" id="R-MMU-6814122">
    <property type="pathway name" value="Cooperation of PDCL (PhLP1) and TRiC/CCT in G-protein beta folding"/>
</dbReference>
<dbReference type="Reactome" id="R-MMU-8964315">
    <property type="pathway name" value="G beta:gamma signalling through BTK"/>
</dbReference>
<dbReference type="Reactome" id="R-MMU-8964616">
    <property type="pathway name" value="G beta:gamma signalling through CDC42"/>
</dbReference>
<dbReference type="Reactome" id="R-MMU-9009391">
    <property type="pathway name" value="Extra-nuclear estrogen signaling"/>
</dbReference>
<dbReference type="Reactome" id="R-MMU-9634597">
    <property type="pathway name" value="GPER1 signaling"/>
</dbReference>
<dbReference type="Reactome" id="R-MMU-9856530">
    <property type="pathway name" value="High laminar flow shear stress activates signaling by PIEZO1 and PECAM1:CDH5:KDR in endothelial cells"/>
</dbReference>
<dbReference type="Reactome" id="R-MMU-997272">
    <property type="pathway name" value="Inhibition of voltage gated Ca2+ channels via Gbeta/gamma subunits"/>
</dbReference>
<dbReference type="BioGRID-ORCS" id="14699">
    <property type="hits" value="2 hits in 76 CRISPR screens"/>
</dbReference>
<dbReference type="ChiTaRS" id="Gngt1">
    <property type="organism name" value="mouse"/>
</dbReference>
<dbReference type="PRO" id="PR:Q61012"/>
<dbReference type="Proteomes" id="UP000000589">
    <property type="component" value="Chromosome 6"/>
</dbReference>
<dbReference type="RNAct" id="Q61012">
    <property type="molecule type" value="protein"/>
</dbReference>
<dbReference type="Bgee" id="ENSMUSG00000029663">
    <property type="expression patterns" value="Expressed in retinal neural layer and 174 other cell types or tissues"/>
</dbReference>
<dbReference type="GO" id="GO:0005834">
    <property type="term" value="C:heterotrimeric G-protein complex"/>
    <property type="evidence" value="ECO:0000266"/>
    <property type="project" value="MGI"/>
</dbReference>
<dbReference type="GO" id="GO:0001917">
    <property type="term" value="C:photoreceptor inner segment"/>
    <property type="evidence" value="ECO:0007669"/>
    <property type="project" value="Ensembl"/>
</dbReference>
<dbReference type="GO" id="GO:0001750">
    <property type="term" value="C:photoreceptor outer segment"/>
    <property type="evidence" value="ECO:0007669"/>
    <property type="project" value="Ensembl"/>
</dbReference>
<dbReference type="GO" id="GO:0031681">
    <property type="term" value="F:G-protein beta-subunit binding"/>
    <property type="evidence" value="ECO:0007669"/>
    <property type="project" value="InterPro"/>
</dbReference>
<dbReference type="GO" id="GO:0003924">
    <property type="term" value="F:GTPase activity"/>
    <property type="evidence" value="ECO:0000266"/>
    <property type="project" value="MGI"/>
</dbReference>
<dbReference type="GO" id="GO:0010659">
    <property type="term" value="P:cardiac muscle cell apoptotic process"/>
    <property type="evidence" value="ECO:0000266"/>
    <property type="project" value="MGI"/>
</dbReference>
<dbReference type="GO" id="GO:0071456">
    <property type="term" value="P:cellular response to hypoxia"/>
    <property type="evidence" value="ECO:0000266"/>
    <property type="project" value="MGI"/>
</dbReference>
<dbReference type="GO" id="GO:0042462">
    <property type="term" value="P:eye photoreceptor cell development"/>
    <property type="evidence" value="ECO:0000315"/>
    <property type="project" value="MGI"/>
</dbReference>
<dbReference type="GO" id="GO:0007186">
    <property type="term" value="P:G protein-coupled receptor signaling pathway"/>
    <property type="evidence" value="ECO:0000266"/>
    <property type="project" value="MGI"/>
</dbReference>
<dbReference type="GO" id="GO:0007602">
    <property type="term" value="P:phototransduction"/>
    <property type="evidence" value="ECO:0000315"/>
    <property type="project" value="MGI"/>
</dbReference>
<dbReference type="GO" id="GO:0008104">
    <property type="term" value="P:protein localization"/>
    <property type="evidence" value="ECO:0000315"/>
    <property type="project" value="MGI"/>
</dbReference>
<dbReference type="CDD" id="cd00068">
    <property type="entry name" value="GGL"/>
    <property type="match status" value="1"/>
</dbReference>
<dbReference type="FunFam" id="4.10.260.10:FF:000001">
    <property type="entry name" value="Guanine nucleotide-binding protein subunit gamma"/>
    <property type="match status" value="1"/>
</dbReference>
<dbReference type="Gene3D" id="4.10.260.10">
    <property type="entry name" value="Transducin (heterotrimeric G protein), gamma chain"/>
    <property type="match status" value="1"/>
</dbReference>
<dbReference type="InterPro" id="IPR015898">
    <property type="entry name" value="G-protein_gamma-like_dom"/>
</dbReference>
<dbReference type="InterPro" id="IPR036284">
    <property type="entry name" value="GGL_sf"/>
</dbReference>
<dbReference type="InterPro" id="IPR001770">
    <property type="entry name" value="Gprotein-gamma"/>
</dbReference>
<dbReference type="PANTHER" id="PTHR13809">
    <property type="entry name" value="GUANINE NUCLEOTIDE-BINDING PROTEIN GAMMA SUBUNIT"/>
    <property type="match status" value="1"/>
</dbReference>
<dbReference type="Pfam" id="PF00631">
    <property type="entry name" value="G-gamma"/>
    <property type="match status" value="1"/>
</dbReference>
<dbReference type="PRINTS" id="PR00321">
    <property type="entry name" value="GPROTEING"/>
</dbReference>
<dbReference type="SMART" id="SM01224">
    <property type="entry name" value="G_gamma"/>
    <property type="match status" value="1"/>
</dbReference>
<dbReference type="SMART" id="SM00224">
    <property type="entry name" value="GGL"/>
    <property type="match status" value="1"/>
</dbReference>
<dbReference type="SUPFAM" id="SSF48670">
    <property type="entry name" value="Transducin (heterotrimeric G protein), gamma chain"/>
    <property type="match status" value="1"/>
</dbReference>
<dbReference type="PROSITE" id="PS50058">
    <property type="entry name" value="G_PROTEIN_GAMMA"/>
    <property type="match status" value="1"/>
</dbReference>
<sequence>MPVINIEDLTEKDKLKMEVDQLKKEVTLERMMVSKCCEEVRDYIEERSGEDPLVKGIPEDKNPFKELKGGCVIS</sequence>
<keyword id="KW-1003">Cell membrane</keyword>
<keyword id="KW-0903">Direct protein sequencing</keyword>
<keyword id="KW-0449">Lipoprotein</keyword>
<keyword id="KW-0472">Membrane</keyword>
<keyword id="KW-0488">Methylation</keyword>
<keyword id="KW-0636">Prenylation</keyword>
<keyword id="KW-1185">Reference proteome</keyword>
<keyword id="KW-0807">Transducer</keyword>
<organism>
    <name type="scientific">Mus musculus</name>
    <name type="common">Mouse</name>
    <dbReference type="NCBI Taxonomy" id="10090"/>
    <lineage>
        <taxon>Eukaryota</taxon>
        <taxon>Metazoa</taxon>
        <taxon>Chordata</taxon>
        <taxon>Craniata</taxon>
        <taxon>Vertebrata</taxon>
        <taxon>Euteleostomi</taxon>
        <taxon>Mammalia</taxon>
        <taxon>Eutheria</taxon>
        <taxon>Euarchontoglires</taxon>
        <taxon>Glires</taxon>
        <taxon>Rodentia</taxon>
        <taxon>Myomorpha</taxon>
        <taxon>Muroidea</taxon>
        <taxon>Muridae</taxon>
        <taxon>Murinae</taxon>
        <taxon>Mus</taxon>
        <taxon>Mus</taxon>
    </lineage>
</organism>
<feature type="initiator methionine" description="Removed" evidence="1">
    <location>
        <position position="1"/>
    </location>
</feature>
<feature type="chain" id="PRO_0000012607" description="Guanine nucleotide-binding protein G(T) subunit gamma-T1" evidence="1">
    <location>
        <begin position="2"/>
        <end position="71"/>
    </location>
</feature>
<feature type="propeptide" id="PRO_0000012608" description="Removed in mature form" evidence="1">
    <location>
        <begin position="72"/>
        <end position="74"/>
    </location>
</feature>
<feature type="modified residue" description="Cysteine methyl ester" evidence="2">
    <location>
        <position position="71"/>
    </location>
</feature>
<feature type="lipid moiety-binding region" description="S-farnesyl cysteine" evidence="2">
    <location>
        <position position="71"/>
    </location>
</feature>
<gene>
    <name type="primary">Gngt1</name>
    <name type="synonym">Gng1</name>
</gene>
<comment type="function">
    <text>Guanine nucleotide-binding proteins (G proteins) are involved as a modulator or transducer in various transmembrane signaling systems. The beta and gamma chains are required for the GTPase activity, for replacement of GDP by GTP, and for G protein-effector interaction.</text>
</comment>
<comment type="subunit">
    <text>G proteins are composed of 3 units, alpha, beta and gamma.</text>
</comment>
<comment type="subcellular location">
    <subcellularLocation>
        <location evidence="3">Cell membrane</location>
        <topology evidence="3">Lipid-anchor</topology>
        <orientation evidence="3">Cytoplasmic side</orientation>
    </subcellularLocation>
</comment>
<comment type="tissue specificity">
    <text>Retinal rod outer segment.</text>
</comment>
<comment type="mass spectrometry">
    <text>Includes farnesylation and methylation.</text>
</comment>
<comment type="similarity">
    <text evidence="3">Belongs to the G protein gamma family.</text>
</comment>
<evidence type="ECO:0000250" key="1">
    <source>
        <dbReference type="UniProtKB" id="P02698"/>
    </source>
</evidence>
<evidence type="ECO:0000269" key="2">
    <source>
    </source>
</evidence>
<evidence type="ECO:0000305" key="3"/>
<protein>
    <recommendedName>
        <fullName>Guanine nucleotide-binding protein G(T) subunit gamma-T1</fullName>
    </recommendedName>
    <alternativeName>
        <fullName>Transducin gamma chain</fullName>
    </alternativeName>
</protein>
<accession>Q61012</accession>
<accession>Q9CR01</accession>
<reference key="1">
    <citation type="journal article" date="2005" name="Science">
        <title>The transcriptional landscape of the mammalian genome.</title>
        <authorList>
            <person name="Carninci P."/>
            <person name="Kasukawa T."/>
            <person name="Katayama S."/>
            <person name="Gough J."/>
            <person name="Frith M.C."/>
            <person name="Maeda N."/>
            <person name="Oyama R."/>
            <person name="Ravasi T."/>
            <person name="Lenhard B."/>
            <person name="Wells C."/>
            <person name="Kodzius R."/>
            <person name="Shimokawa K."/>
            <person name="Bajic V.B."/>
            <person name="Brenner S.E."/>
            <person name="Batalov S."/>
            <person name="Forrest A.R."/>
            <person name="Zavolan M."/>
            <person name="Davis M.J."/>
            <person name="Wilming L.G."/>
            <person name="Aidinis V."/>
            <person name="Allen J.E."/>
            <person name="Ambesi-Impiombato A."/>
            <person name="Apweiler R."/>
            <person name="Aturaliya R.N."/>
            <person name="Bailey T.L."/>
            <person name="Bansal M."/>
            <person name="Baxter L."/>
            <person name="Beisel K.W."/>
            <person name="Bersano T."/>
            <person name="Bono H."/>
            <person name="Chalk A.M."/>
            <person name="Chiu K.P."/>
            <person name="Choudhary V."/>
            <person name="Christoffels A."/>
            <person name="Clutterbuck D.R."/>
            <person name="Crowe M.L."/>
            <person name="Dalla E."/>
            <person name="Dalrymple B.P."/>
            <person name="de Bono B."/>
            <person name="Della Gatta G."/>
            <person name="di Bernardo D."/>
            <person name="Down T."/>
            <person name="Engstrom P."/>
            <person name="Fagiolini M."/>
            <person name="Faulkner G."/>
            <person name="Fletcher C.F."/>
            <person name="Fukushima T."/>
            <person name="Furuno M."/>
            <person name="Futaki S."/>
            <person name="Gariboldi M."/>
            <person name="Georgii-Hemming P."/>
            <person name="Gingeras T.R."/>
            <person name="Gojobori T."/>
            <person name="Green R.E."/>
            <person name="Gustincich S."/>
            <person name="Harbers M."/>
            <person name="Hayashi Y."/>
            <person name="Hensch T.K."/>
            <person name="Hirokawa N."/>
            <person name="Hill D."/>
            <person name="Huminiecki L."/>
            <person name="Iacono M."/>
            <person name="Ikeo K."/>
            <person name="Iwama A."/>
            <person name="Ishikawa T."/>
            <person name="Jakt M."/>
            <person name="Kanapin A."/>
            <person name="Katoh M."/>
            <person name="Kawasawa Y."/>
            <person name="Kelso J."/>
            <person name="Kitamura H."/>
            <person name="Kitano H."/>
            <person name="Kollias G."/>
            <person name="Krishnan S.P."/>
            <person name="Kruger A."/>
            <person name="Kummerfeld S.K."/>
            <person name="Kurochkin I.V."/>
            <person name="Lareau L.F."/>
            <person name="Lazarevic D."/>
            <person name="Lipovich L."/>
            <person name="Liu J."/>
            <person name="Liuni S."/>
            <person name="McWilliam S."/>
            <person name="Madan Babu M."/>
            <person name="Madera M."/>
            <person name="Marchionni L."/>
            <person name="Matsuda H."/>
            <person name="Matsuzawa S."/>
            <person name="Miki H."/>
            <person name="Mignone F."/>
            <person name="Miyake S."/>
            <person name="Morris K."/>
            <person name="Mottagui-Tabar S."/>
            <person name="Mulder N."/>
            <person name="Nakano N."/>
            <person name="Nakauchi H."/>
            <person name="Ng P."/>
            <person name="Nilsson R."/>
            <person name="Nishiguchi S."/>
            <person name="Nishikawa S."/>
            <person name="Nori F."/>
            <person name="Ohara O."/>
            <person name="Okazaki Y."/>
            <person name="Orlando V."/>
            <person name="Pang K.C."/>
            <person name="Pavan W.J."/>
            <person name="Pavesi G."/>
            <person name="Pesole G."/>
            <person name="Petrovsky N."/>
            <person name="Piazza S."/>
            <person name="Reed J."/>
            <person name="Reid J.F."/>
            <person name="Ring B.Z."/>
            <person name="Ringwald M."/>
            <person name="Rost B."/>
            <person name="Ruan Y."/>
            <person name="Salzberg S.L."/>
            <person name="Sandelin A."/>
            <person name="Schneider C."/>
            <person name="Schoenbach C."/>
            <person name="Sekiguchi K."/>
            <person name="Semple C.A."/>
            <person name="Seno S."/>
            <person name="Sessa L."/>
            <person name="Sheng Y."/>
            <person name="Shibata Y."/>
            <person name="Shimada H."/>
            <person name="Shimada K."/>
            <person name="Silva D."/>
            <person name="Sinclair B."/>
            <person name="Sperling S."/>
            <person name="Stupka E."/>
            <person name="Sugiura K."/>
            <person name="Sultana R."/>
            <person name="Takenaka Y."/>
            <person name="Taki K."/>
            <person name="Tammoja K."/>
            <person name="Tan S.L."/>
            <person name="Tang S."/>
            <person name="Taylor M.S."/>
            <person name="Tegner J."/>
            <person name="Teichmann S.A."/>
            <person name="Ueda H.R."/>
            <person name="van Nimwegen E."/>
            <person name="Verardo R."/>
            <person name="Wei C.L."/>
            <person name="Yagi K."/>
            <person name="Yamanishi H."/>
            <person name="Zabarovsky E."/>
            <person name="Zhu S."/>
            <person name="Zimmer A."/>
            <person name="Hide W."/>
            <person name="Bult C."/>
            <person name="Grimmond S.M."/>
            <person name="Teasdale R.D."/>
            <person name="Liu E.T."/>
            <person name="Brusic V."/>
            <person name="Quackenbush J."/>
            <person name="Wahlestedt C."/>
            <person name="Mattick J.S."/>
            <person name="Hume D.A."/>
            <person name="Kai C."/>
            <person name="Sasaki D."/>
            <person name="Tomaru Y."/>
            <person name="Fukuda S."/>
            <person name="Kanamori-Katayama M."/>
            <person name="Suzuki M."/>
            <person name="Aoki J."/>
            <person name="Arakawa T."/>
            <person name="Iida J."/>
            <person name="Imamura K."/>
            <person name="Itoh M."/>
            <person name="Kato T."/>
            <person name="Kawaji H."/>
            <person name="Kawagashira N."/>
            <person name="Kawashima T."/>
            <person name="Kojima M."/>
            <person name="Kondo S."/>
            <person name="Konno H."/>
            <person name="Nakano K."/>
            <person name="Ninomiya N."/>
            <person name="Nishio T."/>
            <person name="Okada M."/>
            <person name="Plessy C."/>
            <person name="Shibata K."/>
            <person name="Shiraki T."/>
            <person name="Suzuki S."/>
            <person name="Tagami M."/>
            <person name="Waki K."/>
            <person name="Watahiki A."/>
            <person name="Okamura-Oho Y."/>
            <person name="Suzuki H."/>
            <person name="Kawai J."/>
            <person name="Hayashizaki Y."/>
        </authorList>
    </citation>
    <scope>NUCLEOTIDE SEQUENCE [LARGE SCALE MRNA]</scope>
    <source>
        <strain>C57BL/6J</strain>
        <tissue>Retina</tissue>
    </source>
</reference>
<reference key="2">
    <citation type="journal article" date="2004" name="Genome Res.">
        <title>The status, quality, and expansion of the NIH full-length cDNA project: the Mammalian Gene Collection (MGC).</title>
        <authorList>
            <consortium name="The MGC Project Team"/>
        </authorList>
    </citation>
    <scope>NUCLEOTIDE SEQUENCE [LARGE SCALE MRNA]</scope>
    <source>
        <tissue>Eye</tissue>
    </source>
</reference>
<reference key="3">
    <citation type="journal article" date="2005" name="Rapid Commun. Mass Spectrom.">
        <title>Top-down analysis of protein isoprenylation by electrospray ionization hybrid quadrupole time-of-flight tandem mass spectrometry; the mouse Tgamma protein.</title>
        <authorList>
            <person name="Kassai H."/>
            <person name="Satomi Y."/>
            <person name="Fukada Y."/>
            <person name="Takao T."/>
        </authorList>
    </citation>
    <scope>PROTEIN SEQUENCE OF 2-71</scope>
    <scope>ISOPRENYLATION AT CYS-71</scope>
    <scope>METHYLATION AT CYS-71</scope>
    <scope>MASS SPECTROMETRY</scope>
</reference>
<reference key="4">
    <citation type="journal article" date="1996" name="Mol. Reprod. Dev.">
        <title>G protein gene expression during mouse oocyte growth and maturation, and preimplantation embryo development.</title>
        <authorList>
            <person name="Williams C.J."/>
            <person name="Schultz R.M."/>
            <person name="Kopf G.S."/>
        </authorList>
    </citation>
    <scope>NUCLEOTIDE SEQUENCE [MRNA] OF 8-66</scope>
    <source>
        <strain>CF-1 / Harlan</strain>
        <tissue>Retina</tissue>
    </source>
</reference>
<proteinExistence type="evidence at protein level"/>
<name>GBG1_MOUSE</name>